<gene>
    <name evidence="1" type="primary">rplQ</name>
    <name type="ordered locus">Ddes_0687</name>
</gene>
<sequence>MRHSNSGRKFSRTPAHRKAMLHNLAKALLIHGKIRTTEIKAKELRRVVEPLITLAKRNDLHARRQAYRVLNDHALVKRLFDEIGPVFAGVPGGYTRILKMAMPRKGDNAPMAIIELSRSSETAAAEAPKAAKAAPVKEAKPAAEEAPAKPKRTRKPKADEADAEAAKEEN</sequence>
<reference key="1">
    <citation type="submission" date="2009-01" db="EMBL/GenBank/DDBJ databases">
        <title>Complete sequence of Desulfovibrio desulfuricans subsp. desulfuricans str. ATCC 27774.</title>
        <authorList>
            <consortium name="US DOE Joint Genome Institute"/>
            <person name="Lucas S."/>
            <person name="Copeland A."/>
            <person name="Lapidus A."/>
            <person name="Glavina del Rio T."/>
            <person name="Tice H."/>
            <person name="Bruce D."/>
            <person name="Goodwin L."/>
            <person name="Pitluck S."/>
            <person name="Sims D."/>
            <person name="Lu M."/>
            <person name="Kiss H."/>
            <person name="Meineke L."/>
            <person name="Brettin T."/>
            <person name="Detter J.C."/>
            <person name="Han C."/>
            <person name="Larimer F."/>
            <person name="Land M."/>
            <person name="Hauser L."/>
            <person name="Kyrpides N."/>
            <person name="Ovchinnikova G."/>
            <person name="Hazen T.C."/>
        </authorList>
    </citation>
    <scope>NUCLEOTIDE SEQUENCE [LARGE SCALE GENOMIC DNA]</scope>
    <source>
        <strain>ATCC 27774 / DSM 6949 / MB</strain>
    </source>
</reference>
<protein>
    <recommendedName>
        <fullName evidence="1">Large ribosomal subunit protein bL17</fullName>
    </recommendedName>
    <alternativeName>
        <fullName evidence="3">50S ribosomal protein L17</fullName>
    </alternativeName>
</protein>
<evidence type="ECO:0000255" key="1">
    <source>
        <dbReference type="HAMAP-Rule" id="MF_01368"/>
    </source>
</evidence>
<evidence type="ECO:0000256" key="2">
    <source>
        <dbReference type="SAM" id="MobiDB-lite"/>
    </source>
</evidence>
<evidence type="ECO:0000305" key="3"/>
<accession>B8IYL8</accession>
<comment type="subunit">
    <text evidence="1">Part of the 50S ribosomal subunit. Contacts protein L32.</text>
</comment>
<comment type="similarity">
    <text evidence="1">Belongs to the bacterial ribosomal protein bL17 family.</text>
</comment>
<keyword id="KW-0687">Ribonucleoprotein</keyword>
<keyword id="KW-0689">Ribosomal protein</keyword>
<name>RL17_DESDA</name>
<dbReference type="EMBL" id="CP001358">
    <property type="protein sequence ID" value="ACL48595.1"/>
    <property type="molecule type" value="Genomic_DNA"/>
</dbReference>
<dbReference type="SMR" id="B8IYL8"/>
<dbReference type="STRING" id="525146.Ddes_0687"/>
<dbReference type="KEGG" id="dds:Ddes_0687"/>
<dbReference type="eggNOG" id="COG0203">
    <property type="taxonomic scope" value="Bacteria"/>
</dbReference>
<dbReference type="HOGENOM" id="CLU_074407_0_1_7"/>
<dbReference type="GO" id="GO:0022625">
    <property type="term" value="C:cytosolic large ribosomal subunit"/>
    <property type="evidence" value="ECO:0007669"/>
    <property type="project" value="TreeGrafter"/>
</dbReference>
<dbReference type="GO" id="GO:0003735">
    <property type="term" value="F:structural constituent of ribosome"/>
    <property type="evidence" value="ECO:0007669"/>
    <property type="project" value="InterPro"/>
</dbReference>
<dbReference type="GO" id="GO:0006412">
    <property type="term" value="P:translation"/>
    <property type="evidence" value="ECO:0007669"/>
    <property type="project" value="UniProtKB-UniRule"/>
</dbReference>
<dbReference type="FunFam" id="3.90.1030.10:FF:000001">
    <property type="entry name" value="50S ribosomal protein L17"/>
    <property type="match status" value="1"/>
</dbReference>
<dbReference type="Gene3D" id="3.90.1030.10">
    <property type="entry name" value="Ribosomal protein L17"/>
    <property type="match status" value="1"/>
</dbReference>
<dbReference type="HAMAP" id="MF_01368">
    <property type="entry name" value="Ribosomal_bL17"/>
    <property type="match status" value="1"/>
</dbReference>
<dbReference type="InterPro" id="IPR000456">
    <property type="entry name" value="Ribosomal_bL17"/>
</dbReference>
<dbReference type="InterPro" id="IPR047859">
    <property type="entry name" value="Ribosomal_bL17_CS"/>
</dbReference>
<dbReference type="InterPro" id="IPR036373">
    <property type="entry name" value="Ribosomal_bL17_sf"/>
</dbReference>
<dbReference type="NCBIfam" id="TIGR00059">
    <property type="entry name" value="L17"/>
    <property type="match status" value="1"/>
</dbReference>
<dbReference type="PANTHER" id="PTHR14413:SF16">
    <property type="entry name" value="LARGE RIBOSOMAL SUBUNIT PROTEIN BL17M"/>
    <property type="match status" value="1"/>
</dbReference>
<dbReference type="PANTHER" id="PTHR14413">
    <property type="entry name" value="RIBOSOMAL PROTEIN L17"/>
    <property type="match status" value="1"/>
</dbReference>
<dbReference type="Pfam" id="PF01196">
    <property type="entry name" value="Ribosomal_L17"/>
    <property type="match status" value="1"/>
</dbReference>
<dbReference type="SUPFAM" id="SSF64263">
    <property type="entry name" value="Prokaryotic ribosomal protein L17"/>
    <property type="match status" value="1"/>
</dbReference>
<dbReference type="PROSITE" id="PS01167">
    <property type="entry name" value="RIBOSOMAL_L17"/>
    <property type="match status" value="1"/>
</dbReference>
<feature type="chain" id="PRO_1000184018" description="Large ribosomal subunit protein bL17">
    <location>
        <begin position="1"/>
        <end position="170"/>
    </location>
</feature>
<feature type="region of interest" description="Disordered" evidence="2">
    <location>
        <begin position="124"/>
        <end position="170"/>
    </location>
</feature>
<feature type="compositionally biased region" description="Low complexity" evidence="2">
    <location>
        <begin position="124"/>
        <end position="134"/>
    </location>
</feature>
<feature type="compositionally biased region" description="Basic and acidic residues" evidence="2">
    <location>
        <begin position="135"/>
        <end position="148"/>
    </location>
</feature>
<feature type="compositionally biased region" description="Basic and acidic residues" evidence="2">
    <location>
        <begin position="156"/>
        <end position="170"/>
    </location>
</feature>
<organism>
    <name type="scientific">Desulfovibrio desulfuricans (strain ATCC 27774 / DSM 6949 / MB)</name>
    <dbReference type="NCBI Taxonomy" id="525146"/>
    <lineage>
        <taxon>Bacteria</taxon>
        <taxon>Pseudomonadati</taxon>
        <taxon>Thermodesulfobacteriota</taxon>
        <taxon>Desulfovibrionia</taxon>
        <taxon>Desulfovibrionales</taxon>
        <taxon>Desulfovibrionaceae</taxon>
        <taxon>Desulfovibrio</taxon>
    </lineage>
</organism>
<proteinExistence type="inferred from homology"/>